<sequence length="444" mass="49489">MNLPFDDWLPQQRWYGGRSREFSSATPDVVVTLRDDLDLVLLTVNYAEGRPEHYQILVRWDAAPIDEYSVVARIGSDTEHGERTGYDALYDPAAAHFLMTLIDSSAQVGDIRFAKEPEVTLPLQAAPRVSSAEQSNTSVIFDQDAILKVFRRITPGINPDIELNRVLARAGNPHVARLLGSFETTLDREPYALGMVTEFAANSAEGWDMALTSTRDLFAEGDLYADEVGGDFAGESHRLGEAVASVHSTLAAELGTSQVPFPLDTVLERLQSVADAVPELQPHAQSIEERYRKLADQEITVHRVHGDLHLGQVLRTTEGWLLIDFEGEPGQPLDERRRPDSPMRDVAGMLRSYEYAAYQRLIERGGDAQHDKQLAARAREWVNRNVSSFCDGYAAASGTDPRDHAELLAAYELDKAVYEVGYEARYRPSWLPIPMKSILRILGV</sequence>
<feature type="chain" id="PRO_0000412891" description="Maltokinase">
    <location>
        <begin position="1"/>
        <end position="444"/>
    </location>
</feature>
<gene>
    <name type="primary">mak</name>
    <name type="ordered locus">Mkms_5209</name>
</gene>
<organism>
    <name type="scientific">Mycobacterium sp. (strain KMS)</name>
    <dbReference type="NCBI Taxonomy" id="189918"/>
    <lineage>
        <taxon>Bacteria</taxon>
        <taxon>Bacillati</taxon>
        <taxon>Actinomycetota</taxon>
        <taxon>Actinomycetes</taxon>
        <taxon>Mycobacteriales</taxon>
        <taxon>Mycobacteriaceae</taxon>
        <taxon>Mycobacterium</taxon>
    </lineage>
</organism>
<dbReference type="EC" id="2.7.1.175"/>
<dbReference type="EMBL" id="CP000518">
    <property type="protein sequence ID" value="ABL94398.1"/>
    <property type="molecule type" value="Genomic_DNA"/>
</dbReference>
<dbReference type="SMR" id="A1UNJ0"/>
<dbReference type="STRING" id="189918.Mkms_5209"/>
<dbReference type="KEGG" id="mkm:Mkms_5209"/>
<dbReference type="HOGENOM" id="CLU_029675_0_0_11"/>
<dbReference type="OrthoDB" id="3787729at2"/>
<dbReference type="UniPathway" id="UPA00164"/>
<dbReference type="GO" id="GO:0005524">
    <property type="term" value="F:ATP binding"/>
    <property type="evidence" value="ECO:0007669"/>
    <property type="project" value="UniProtKB-KW"/>
</dbReference>
<dbReference type="GO" id="GO:0016301">
    <property type="term" value="F:kinase activity"/>
    <property type="evidence" value="ECO:0007669"/>
    <property type="project" value="UniProtKB-KW"/>
</dbReference>
<dbReference type="GO" id="GO:0046835">
    <property type="term" value="P:carbohydrate phosphorylation"/>
    <property type="evidence" value="ECO:0000250"/>
    <property type="project" value="UniProtKB"/>
</dbReference>
<dbReference type="GO" id="GO:0005978">
    <property type="term" value="P:glycogen biosynthetic process"/>
    <property type="evidence" value="ECO:0007669"/>
    <property type="project" value="UniProtKB-UniPathway"/>
</dbReference>
<dbReference type="GO" id="GO:0005992">
    <property type="term" value="P:trehalose biosynthetic process"/>
    <property type="evidence" value="ECO:0000250"/>
    <property type="project" value="UniProtKB"/>
</dbReference>
<dbReference type="FunFam" id="3.90.1200.10:FF:000010">
    <property type="entry name" value="Maltokinase"/>
    <property type="match status" value="1"/>
</dbReference>
<dbReference type="Gene3D" id="3.90.1200.10">
    <property type="match status" value="1"/>
</dbReference>
<dbReference type="InterPro" id="IPR002575">
    <property type="entry name" value="Aminoglycoside_PTrfase"/>
</dbReference>
<dbReference type="InterPro" id="IPR011009">
    <property type="entry name" value="Kinase-like_dom_sf"/>
</dbReference>
<dbReference type="InterPro" id="IPR040999">
    <property type="entry name" value="Mak_N_cap"/>
</dbReference>
<dbReference type="Pfam" id="PF01636">
    <property type="entry name" value="APH"/>
    <property type="match status" value="1"/>
</dbReference>
<dbReference type="Pfam" id="PF18085">
    <property type="entry name" value="Mak_N_cap"/>
    <property type="match status" value="1"/>
</dbReference>
<dbReference type="SUPFAM" id="SSF56112">
    <property type="entry name" value="Protein kinase-like (PK-like)"/>
    <property type="match status" value="1"/>
</dbReference>
<keyword id="KW-0067">ATP-binding</keyword>
<keyword id="KW-0119">Carbohydrate metabolism</keyword>
<keyword id="KW-0320">Glycogen biosynthesis</keyword>
<keyword id="KW-0321">Glycogen metabolism</keyword>
<keyword id="KW-0418">Kinase</keyword>
<keyword id="KW-0547">Nucleotide-binding</keyword>
<keyword id="KW-0808">Transferase</keyword>
<accession>A1UNJ0</accession>
<proteinExistence type="inferred from homology"/>
<reference key="1">
    <citation type="submission" date="2006-12" db="EMBL/GenBank/DDBJ databases">
        <title>Complete sequence of chromosome of Mycobacterium sp. KMS.</title>
        <authorList>
            <consortium name="US DOE Joint Genome Institute"/>
            <person name="Copeland A."/>
            <person name="Lucas S."/>
            <person name="Lapidus A."/>
            <person name="Barry K."/>
            <person name="Detter J.C."/>
            <person name="Glavina del Rio T."/>
            <person name="Hammon N."/>
            <person name="Israni S."/>
            <person name="Dalin E."/>
            <person name="Tice H."/>
            <person name="Pitluck S."/>
            <person name="Kiss H."/>
            <person name="Brettin T."/>
            <person name="Bruce D."/>
            <person name="Han C."/>
            <person name="Tapia R."/>
            <person name="Gilna P."/>
            <person name="Schmutz J."/>
            <person name="Larimer F."/>
            <person name="Land M."/>
            <person name="Hauser L."/>
            <person name="Kyrpides N."/>
            <person name="Mikhailova N."/>
            <person name="Miller C.D."/>
            <person name="Richardson P."/>
        </authorList>
    </citation>
    <scope>NUCLEOTIDE SEQUENCE [LARGE SCALE GENOMIC DNA]</scope>
    <source>
        <strain>KMS</strain>
    </source>
</reference>
<comment type="function">
    <text evidence="1">Catalyzes the ATP-dependent phosphorylation of maltose to maltose 1-phosphate. Is involved in a branched alpha-glucan biosynthetic pathway from trehalose, together with TreS, GlgE and GlgB (By similarity).</text>
</comment>
<comment type="catalytic activity">
    <reaction>
        <text>D-maltose + ATP = alpha-maltose 1-phosphate + ADP + H(+)</text>
        <dbReference type="Rhea" id="RHEA:31915"/>
        <dbReference type="ChEBI" id="CHEBI:15378"/>
        <dbReference type="ChEBI" id="CHEBI:17306"/>
        <dbReference type="ChEBI" id="CHEBI:30616"/>
        <dbReference type="ChEBI" id="CHEBI:63576"/>
        <dbReference type="ChEBI" id="CHEBI:456216"/>
        <dbReference type="EC" id="2.7.1.175"/>
    </reaction>
</comment>
<comment type="pathway">
    <text>Glycan biosynthesis; glycogen biosynthesis.</text>
</comment>
<comment type="subunit">
    <text evidence="1">Monomer.</text>
</comment>
<comment type="similarity">
    <text evidence="2">Belongs to the aminoglycoside phosphotransferase family.</text>
</comment>
<name>MAK_MYCSK</name>
<evidence type="ECO:0000250" key="1"/>
<evidence type="ECO:0000305" key="2"/>
<protein>
    <recommendedName>
        <fullName>Maltokinase</fullName>
        <shortName>MaK</shortName>
        <ecNumber>2.7.1.175</ecNumber>
    </recommendedName>
    <alternativeName>
        <fullName>Maltose-1-phosphate synthase</fullName>
    </alternativeName>
</protein>